<feature type="chain" id="PRO_0000269243" description="Carbamate kinase 3">
    <location>
        <begin position="1"/>
        <end position="309"/>
    </location>
</feature>
<name>ARCC3_STAA3</name>
<sequence length="309" mass="33157">MSKIVVALGGNALGQSPKEQLDLLKSTSKSLVSLIDKGYEIVISHGNGPQVGSINLGLNYAAEHKQGPPFPFPECGAMSQAYIGYQMQESLQNELHSMGIDKQVVTLVTQVQVASDDSAFNNPTKPIGLFYTKEQADKFTKEKGYTFVEDSGRGYRRVVPSPQPISIVELDSIETLITHGTLVIAAGGGGIPVIKENEVYTGVDAVIDKDKTSALLAAHLQSDQLIILTAVDHVYINYGKENQRGLDEVSVDEMKKHISDGQFAKGSMLPKVEAALQFLEKNTKGSVLITSLAGLGDALDGKIGTLIKN</sequence>
<dbReference type="EC" id="2.7.2.2"/>
<dbReference type="EMBL" id="CP000255">
    <property type="protein sequence ID" value="ABD20922.1"/>
    <property type="molecule type" value="Genomic_DNA"/>
</dbReference>
<dbReference type="SMR" id="Q2FKJ8"/>
<dbReference type="KEGG" id="saa:SAUSA300_0061"/>
<dbReference type="HOGENOM" id="CLU_076278_0_0_9"/>
<dbReference type="OMA" id="HIVHDHE"/>
<dbReference type="UniPathway" id="UPA00996">
    <property type="reaction ID" value="UER00366"/>
</dbReference>
<dbReference type="Proteomes" id="UP000001939">
    <property type="component" value="Chromosome"/>
</dbReference>
<dbReference type="GO" id="GO:0005829">
    <property type="term" value="C:cytosol"/>
    <property type="evidence" value="ECO:0007669"/>
    <property type="project" value="TreeGrafter"/>
</dbReference>
<dbReference type="GO" id="GO:0005524">
    <property type="term" value="F:ATP binding"/>
    <property type="evidence" value="ECO:0007669"/>
    <property type="project" value="UniProtKB-KW"/>
</dbReference>
<dbReference type="GO" id="GO:0008804">
    <property type="term" value="F:carbamate kinase activity"/>
    <property type="evidence" value="ECO:0007669"/>
    <property type="project" value="UniProtKB-EC"/>
</dbReference>
<dbReference type="GO" id="GO:0019546">
    <property type="term" value="P:arginine deiminase pathway"/>
    <property type="evidence" value="ECO:0007669"/>
    <property type="project" value="TreeGrafter"/>
</dbReference>
<dbReference type="CDD" id="cd04235">
    <property type="entry name" value="AAK_CK"/>
    <property type="match status" value="1"/>
</dbReference>
<dbReference type="FunFam" id="3.40.1160.10:FF:000007">
    <property type="entry name" value="Carbamate kinase"/>
    <property type="match status" value="1"/>
</dbReference>
<dbReference type="Gene3D" id="3.40.1160.10">
    <property type="entry name" value="Acetylglutamate kinase-like"/>
    <property type="match status" value="1"/>
</dbReference>
<dbReference type="InterPro" id="IPR036393">
    <property type="entry name" value="AceGlu_kinase-like_sf"/>
</dbReference>
<dbReference type="InterPro" id="IPR001048">
    <property type="entry name" value="Asp/Glu/Uridylate_kinase"/>
</dbReference>
<dbReference type="InterPro" id="IPR003964">
    <property type="entry name" value="Carb_kinase"/>
</dbReference>
<dbReference type="NCBIfam" id="TIGR00746">
    <property type="entry name" value="arcC"/>
    <property type="match status" value="1"/>
</dbReference>
<dbReference type="NCBIfam" id="NF009007">
    <property type="entry name" value="PRK12352.1"/>
    <property type="match status" value="1"/>
</dbReference>
<dbReference type="PANTHER" id="PTHR30409">
    <property type="entry name" value="CARBAMATE KINASE"/>
    <property type="match status" value="1"/>
</dbReference>
<dbReference type="PANTHER" id="PTHR30409:SF1">
    <property type="entry name" value="CARBAMATE KINASE-RELATED"/>
    <property type="match status" value="1"/>
</dbReference>
<dbReference type="Pfam" id="PF00696">
    <property type="entry name" value="AA_kinase"/>
    <property type="match status" value="1"/>
</dbReference>
<dbReference type="PIRSF" id="PIRSF000723">
    <property type="entry name" value="Carbamate_kin"/>
    <property type="match status" value="1"/>
</dbReference>
<dbReference type="PRINTS" id="PR01469">
    <property type="entry name" value="CARBMTKINASE"/>
</dbReference>
<dbReference type="SUPFAM" id="SSF53633">
    <property type="entry name" value="Carbamate kinase-like"/>
    <property type="match status" value="1"/>
</dbReference>
<gene>
    <name type="primary">arcC3</name>
    <name type="ordered locus">SAUSA300_0061</name>
</gene>
<reference key="1">
    <citation type="journal article" date="2006" name="Lancet">
        <title>Complete genome sequence of USA300, an epidemic clone of community-acquired meticillin-resistant Staphylococcus aureus.</title>
        <authorList>
            <person name="Diep B.A."/>
            <person name="Gill S.R."/>
            <person name="Chang R.F."/>
            <person name="Phan T.H."/>
            <person name="Chen J.H."/>
            <person name="Davidson M.G."/>
            <person name="Lin F."/>
            <person name="Lin J."/>
            <person name="Carleton H.A."/>
            <person name="Mongodin E.F."/>
            <person name="Sensabaugh G.F."/>
            <person name="Perdreau-Remington F."/>
        </authorList>
    </citation>
    <scope>NUCLEOTIDE SEQUENCE [LARGE SCALE GENOMIC DNA]</scope>
    <source>
        <strain>USA300</strain>
    </source>
</reference>
<comment type="catalytic activity">
    <reaction>
        <text>hydrogencarbonate + NH4(+) + ATP = carbamoyl phosphate + ADP + H2O + H(+)</text>
        <dbReference type="Rhea" id="RHEA:10152"/>
        <dbReference type="ChEBI" id="CHEBI:15377"/>
        <dbReference type="ChEBI" id="CHEBI:15378"/>
        <dbReference type="ChEBI" id="CHEBI:17544"/>
        <dbReference type="ChEBI" id="CHEBI:28938"/>
        <dbReference type="ChEBI" id="CHEBI:30616"/>
        <dbReference type="ChEBI" id="CHEBI:58228"/>
        <dbReference type="ChEBI" id="CHEBI:456216"/>
        <dbReference type="EC" id="2.7.2.2"/>
    </reaction>
</comment>
<comment type="pathway">
    <text>Metabolic intermediate metabolism; carbamoyl phosphate degradation; CO(2) and NH(3) from carbamoyl phosphate: step 1/1.</text>
</comment>
<comment type="subcellular location">
    <subcellularLocation>
        <location evidence="1">Cytoplasm</location>
    </subcellularLocation>
</comment>
<comment type="similarity">
    <text evidence="1">Belongs to the carbamate kinase family.</text>
</comment>
<accession>Q2FKJ8</accession>
<organism>
    <name type="scientific">Staphylococcus aureus (strain USA300)</name>
    <dbReference type="NCBI Taxonomy" id="367830"/>
    <lineage>
        <taxon>Bacteria</taxon>
        <taxon>Bacillati</taxon>
        <taxon>Bacillota</taxon>
        <taxon>Bacilli</taxon>
        <taxon>Bacillales</taxon>
        <taxon>Staphylococcaceae</taxon>
        <taxon>Staphylococcus</taxon>
    </lineage>
</organism>
<evidence type="ECO:0000305" key="1"/>
<keyword id="KW-0056">Arginine metabolism</keyword>
<keyword id="KW-0067">ATP-binding</keyword>
<keyword id="KW-0963">Cytoplasm</keyword>
<keyword id="KW-0418">Kinase</keyword>
<keyword id="KW-0547">Nucleotide-binding</keyword>
<keyword id="KW-0808">Transferase</keyword>
<proteinExistence type="inferred from homology"/>
<protein>
    <recommendedName>
        <fullName>Carbamate kinase 3</fullName>
        <ecNumber>2.7.2.2</ecNumber>
    </recommendedName>
</protein>